<dbReference type="EMBL" id="AC079830">
    <property type="protein sequence ID" value="AAG46077.1"/>
    <property type="molecule type" value="Genomic_DNA"/>
</dbReference>
<dbReference type="EMBL" id="AP008209">
    <property type="protein sequence ID" value="BAF12800.1"/>
    <property type="molecule type" value="Genomic_DNA"/>
</dbReference>
<dbReference type="EMBL" id="AP014959">
    <property type="protein sequence ID" value="BAS85719.1"/>
    <property type="molecule type" value="Genomic_DNA"/>
</dbReference>
<dbReference type="EMBL" id="AK062614">
    <property type="status" value="NOT_ANNOTATED_CDS"/>
    <property type="molecule type" value="mRNA"/>
</dbReference>
<dbReference type="STRING" id="39947.Q9FRF9"/>
<dbReference type="PaxDb" id="39947-Q9FRF9"/>
<dbReference type="EnsemblPlants" id="Os03t0675600-01">
    <property type="protein sequence ID" value="Os03t0675600-01"/>
    <property type="gene ID" value="Os03g0675600"/>
</dbReference>
<dbReference type="Gramene" id="Os03t0675600-01">
    <property type="protein sequence ID" value="Os03t0675600-01"/>
    <property type="gene ID" value="Os03g0675600"/>
</dbReference>
<dbReference type="KEGG" id="dosa:Os03g0675600"/>
<dbReference type="HOGENOM" id="CLU_165727_0_1_1"/>
<dbReference type="InParanoid" id="Q9FRF9"/>
<dbReference type="OMA" id="AYVELNC"/>
<dbReference type="Proteomes" id="UP000000763">
    <property type="component" value="Chromosome 3"/>
</dbReference>
<dbReference type="Proteomes" id="UP000059680">
    <property type="component" value="Chromosome 3"/>
</dbReference>
<dbReference type="GO" id="GO:0005576">
    <property type="term" value="C:extracellular region"/>
    <property type="evidence" value="ECO:0007669"/>
    <property type="project" value="UniProtKB-SubCell"/>
</dbReference>
<dbReference type="GO" id="GO:0008083">
    <property type="term" value="F:growth factor activity"/>
    <property type="evidence" value="ECO:0007669"/>
    <property type="project" value="UniProtKB-KW"/>
</dbReference>
<dbReference type="GO" id="GO:0030154">
    <property type="term" value="P:cell differentiation"/>
    <property type="evidence" value="ECO:0007669"/>
    <property type="project" value="UniProtKB-KW"/>
</dbReference>
<dbReference type="GO" id="GO:0008283">
    <property type="term" value="P:cell population proliferation"/>
    <property type="evidence" value="ECO:0007669"/>
    <property type="project" value="InterPro"/>
</dbReference>
<dbReference type="InterPro" id="IPR009438">
    <property type="entry name" value="Phytosulfokine"/>
</dbReference>
<dbReference type="PANTHER" id="PTHR33285">
    <property type="entry name" value="PHYTOSULFOKINES 3"/>
    <property type="match status" value="1"/>
</dbReference>
<dbReference type="PANTHER" id="PTHR33285:SF55">
    <property type="entry name" value="PHYTOSULFOKINES 3"/>
    <property type="match status" value="1"/>
</dbReference>
<dbReference type="Pfam" id="PF06404">
    <property type="entry name" value="PSK"/>
    <property type="match status" value="1"/>
</dbReference>
<protein>
    <recommendedName>
        <fullName>Phytosulfokines 3</fullName>
    </recommendedName>
    <component>
        <recommendedName>
            <fullName>Phytosulfokine-alpha</fullName>
            <shortName>PSK-alpha</shortName>
            <shortName>Phytosulfokine-a</shortName>
        </recommendedName>
    </component>
    <component>
        <recommendedName>
            <fullName>Phytosulfokine-beta</fullName>
            <shortName>PSK-beta</shortName>
            <shortName>Phytosulfokine-b</shortName>
        </recommendedName>
    </component>
</protein>
<proteinExistence type="evidence at protein level"/>
<organism>
    <name type="scientific">Oryza sativa subsp. japonica</name>
    <name type="common">Rice</name>
    <dbReference type="NCBI Taxonomy" id="39947"/>
    <lineage>
        <taxon>Eukaryota</taxon>
        <taxon>Viridiplantae</taxon>
        <taxon>Streptophyta</taxon>
        <taxon>Embryophyta</taxon>
        <taxon>Tracheophyta</taxon>
        <taxon>Spermatophyta</taxon>
        <taxon>Magnoliopsida</taxon>
        <taxon>Liliopsida</taxon>
        <taxon>Poales</taxon>
        <taxon>Poaceae</taxon>
        <taxon>BOP clade</taxon>
        <taxon>Oryzoideae</taxon>
        <taxon>Oryzeae</taxon>
        <taxon>Oryzinae</taxon>
        <taxon>Oryza</taxon>
        <taxon>Oryza sativa</taxon>
    </lineage>
</organism>
<comment type="function">
    <text>Promotes plant cell differentiation, organogenesis and somatic embryogenesis as well as cell proliferation.</text>
</comment>
<comment type="subcellular location">
    <subcellularLocation>
        <location evidence="1">Secreted</location>
    </subcellularLocation>
</comment>
<comment type="PTM">
    <text evidence="3">Sulfation is important for activity and for the binding to a putative membrane receptor.</text>
</comment>
<comment type="PTM">
    <text>PSK-alpha is produced by endopeptidase digestion. PSK-beta is produced from PSK-alpha by exopeptidase digestion.</text>
</comment>
<comment type="similarity">
    <text evidence="4">Belongs to the phytosulfokine family.</text>
</comment>
<evidence type="ECO:0000250" key="1"/>
<evidence type="ECO:0000255" key="2"/>
<evidence type="ECO:0000269" key="3">
    <source>
    </source>
</evidence>
<evidence type="ECO:0000305" key="4"/>
<reference key="1">
    <citation type="journal article" date="2005" name="Genome Res.">
        <title>Sequence, annotation, and analysis of synteny between rice chromosome 3 and diverged grass species.</title>
        <authorList>
            <consortium name="The rice chromosome 3 sequencing consortium"/>
            <person name="Buell C.R."/>
            <person name="Yuan Q."/>
            <person name="Ouyang S."/>
            <person name="Liu J."/>
            <person name="Zhu W."/>
            <person name="Wang A."/>
            <person name="Maiti R."/>
            <person name="Haas B."/>
            <person name="Wortman J."/>
            <person name="Pertea M."/>
            <person name="Jones K.M."/>
            <person name="Kim M."/>
            <person name="Overton L."/>
            <person name="Tsitrin T."/>
            <person name="Fadrosh D."/>
            <person name="Bera J."/>
            <person name="Weaver B."/>
            <person name="Jin S."/>
            <person name="Johri S."/>
            <person name="Reardon M."/>
            <person name="Webb K."/>
            <person name="Hill J."/>
            <person name="Moffat K."/>
            <person name="Tallon L."/>
            <person name="Van Aken S."/>
            <person name="Lewis M."/>
            <person name="Utterback T."/>
            <person name="Feldblyum T."/>
            <person name="Zismann V."/>
            <person name="Iobst S."/>
            <person name="Hsiao J."/>
            <person name="de Vazeille A.R."/>
            <person name="Salzberg S.L."/>
            <person name="White O."/>
            <person name="Fraser C.M."/>
            <person name="Yu Y."/>
            <person name="Kim H."/>
            <person name="Rambo T."/>
            <person name="Currie J."/>
            <person name="Collura K."/>
            <person name="Kernodle-Thompson S."/>
            <person name="Wei F."/>
            <person name="Kudrna K."/>
            <person name="Ammiraju J.S.S."/>
            <person name="Luo M."/>
            <person name="Goicoechea J.L."/>
            <person name="Wing R.A."/>
            <person name="Henry D."/>
            <person name="Oates R."/>
            <person name="Palmer M."/>
            <person name="Pries G."/>
            <person name="Saski C."/>
            <person name="Simmons J."/>
            <person name="Soderlund C."/>
            <person name="Nelson W."/>
            <person name="de la Bastide M."/>
            <person name="Spiegel L."/>
            <person name="Nascimento L."/>
            <person name="Huang E."/>
            <person name="Preston R."/>
            <person name="Zutavern T."/>
            <person name="Palmer L."/>
            <person name="O'Shaughnessy A."/>
            <person name="Dike S."/>
            <person name="McCombie W.R."/>
            <person name="Minx P."/>
            <person name="Cordum H."/>
            <person name="Wilson R."/>
            <person name="Jin W."/>
            <person name="Lee H.R."/>
            <person name="Jiang J."/>
            <person name="Jackson S."/>
        </authorList>
    </citation>
    <scope>NUCLEOTIDE SEQUENCE [LARGE SCALE GENOMIC DNA]</scope>
    <source>
        <strain>cv. Nipponbare</strain>
    </source>
</reference>
<reference key="2">
    <citation type="journal article" date="2005" name="Nature">
        <title>The map-based sequence of the rice genome.</title>
        <authorList>
            <consortium name="International rice genome sequencing project (IRGSP)"/>
        </authorList>
    </citation>
    <scope>NUCLEOTIDE SEQUENCE [LARGE SCALE GENOMIC DNA]</scope>
    <source>
        <strain>cv. Nipponbare</strain>
    </source>
</reference>
<reference key="3">
    <citation type="journal article" date="2008" name="Nucleic Acids Res.">
        <title>The rice annotation project database (RAP-DB): 2008 update.</title>
        <authorList>
            <consortium name="The rice annotation project (RAP)"/>
        </authorList>
    </citation>
    <scope>GENOME REANNOTATION</scope>
    <source>
        <strain>cv. Nipponbare</strain>
    </source>
</reference>
<reference key="4">
    <citation type="journal article" date="2013" name="Rice">
        <title>Improvement of the Oryza sativa Nipponbare reference genome using next generation sequence and optical map data.</title>
        <authorList>
            <person name="Kawahara Y."/>
            <person name="de la Bastide M."/>
            <person name="Hamilton J.P."/>
            <person name="Kanamori H."/>
            <person name="McCombie W.R."/>
            <person name="Ouyang S."/>
            <person name="Schwartz D.C."/>
            <person name="Tanaka T."/>
            <person name="Wu J."/>
            <person name="Zhou S."/>
            <person name="Childs K.L."/>
            <person name="Davidson R.M."/>
            <person name="Lin H."/>
            <person name="Quesada-Ocampo L."/>
            <person name="Vaillancourt B."/>
            <person name="Sakai H."/>
            <person name="Lee S.S."/>
            <person name="Kim J."/>
            <person name="Numa H."/>
            <person name="Itoh T."/>
            <person name="Buell C.R."/>
            <person name="Matsumoto T."/>
        </authorList>
    </citation>
    <scope>GENOME REANNOTATION</scope>
    <source>
        <strain>cv. Nipponbare</strain>
    </source>
</reference>
<reference key="5">
    <citation type="journal article" date="2003" name="Science">
        <title>Collection, mapping, and annotation of over 28,000 cDNA clones from japonica rice.</title>
        <authorList>
            <consortium name="The rice full-length cDNA consortium"/>
        </authorList>
    </citation>
    <scope>NUCLEOTIDE SEQUENCE [LARGE SCALE MRNA]</scope>
    <source>
        <strain>cv. Nipponbare</strain>
    </source>
</reference>
<reference key="6">
    <citation type="journal article" date="1997" name="Proc. Natl. Acad. Sci. U.S.A.">
        <title>Phytosulfokine-alpha, a sulfated pentapeptide, stimulates the proliferation of rice cells by means of specific high- and low-affinity binding sites.</title>
        <authorList>
            <person name="Matsubayashi Y."/>
            <person name="Takagi L."/>
            <person name="Sakagami Y."/>
        </authorList>
    </citation>
    <scope>PROTEIN SEQUENCE OF PSK-ALPHA AND PSK-BETA</scope>
    <scope>CHARACTERIZATION</scope>
    <scope>SULFATION AT TYR-67 AND TYR-69</scope>
</reference>
<name>PSK3_ORYSJ</name>
<sequence>MSPKVIAICLVALLLPISISHGGRIGPIEPSKASSKVVERGNYDGRVEGCEEDDCLVERLLVAHLDYIYTQGKHN</sequence>
<feature type="signal peptide" evidence="2">
    <location>
        <begin position="1"/>
        <end position="22"/>
    </location>
</feature>
<feature type="propeptide" id="PRO_0000024069" evidence="2">
    <location>
        <begin position="23"/>
        <end position="66"/>
    </location>
</feature>
<feature type="peptide" id="PRO_0000024070" description="Phytosulfokine-alpha" evidence="3">
    <location>
        <begin position="67"/>
        <end position="71"/>
    </location>
</feature>
<feature type="peptide" id="PRO_0000024071" description="Phytosulfokine-beta" evidence="3">
    <location>
        <begin position="67"/>
        <end position="70"/>
    </location>
</feature>
<feature type="propeptide" id="PRO_0000024072" evidence="2">
    <location>
        <begin position="72"/>
        <end position="75"/>
    </location>
</feature>
<feature type="modified residue" description="Sulfotyrosine" evidence="3">
    <location>
        <position position="67"/>
    </location>
</feature>
<feature type="modified residue" description="Sulfotyrosine" evidence="3">
    <location>
        <position position="69"/>
    </location>
</feature>
<accession>Q9FRF9</accession>
<accession>Q0DPN8</accession>
<gene>
    <name type="primary">PSK3</name>
    <name type="ordered locus">Os03g0675600</name>
    <name type="ordered locus">LOC_Os03g47230</name>
    <name type="ORF">OSJNBb0009F04.16</name>
</gene>
<keyword id="KW-0217">Developmental protein</keyword>
<keyword id="KW-0221">Differentiation</keyword>
<keyword id="KW-0903">Direct protein sequencing</keyword>
<keyword id="KW-0339">Growth factor</keyword>
<keyword id="KW-1185">Reference proteome</keyword>
<keyword id="KW-0964">Secreted</keyword>
<keyword id="KW-0732">Signal</keyword>
<keyword id="KW-0765">Sulfation</keyword>